<evidence type="ECO:0000250" key="1">
    <source>
        <dbReference type="UniProtKB" id="Q9QYE9"/>
    </source>
</evidence>
<evidence type="ECO:0000255" key="2">
    <source>
        <dbReference type="PROSITE-ProRule" id="PRU00145"/>
    </source>
</evidence>
<evidence type="ECO:0000269" key="3">
    <source>
    </source>
</evidence>
<evidence type="ECO:0000303" key="4">
    <source>
    </source>
</evidence>
<evidence type="ECO:0000303" key="5">
    <source>
    </source>
</evidence>
<evidence type="ECO:0000303" key="6">
    <source>
    </source>
</evidence>
<evidence type="ECO:0000303" key="7">
    <source>
    </source>
</evidence>
<gene>
    <name type="primary">PLEKHB1</name>
    <name type="synonym">EVT1</name>
    <name type="synonym">KPL1</name>
    <name evidence="4" type="synonym">PHR1</name>
    <name type="synonym">PHRET1</name>
</gene>
<accession>Q9UF11</accession>
<accession>A8K0Q5</accession>
<accession>B2RBP1</accession>
<accession>B7Z716</accession>
<accession>Q9UBF5</accession>
<accession>Q9UI37</accession>
<accession>Q9UI44</accession>
<feature type="chain" id="PRO_0000053886" description="Pleckstrin homology domain-containing family B member 1">
    <location>
        <begin position="1"/>
        <end position="243"/>
    </location>
</feature>
<feature type="domain" description="PH" evidence="2">
    <location>
        <begin position="21"/>
        <end position="128"/>
    </location>
</feature>
<feature type="splice variant" id="VSP_009779" description="In isoform 3 and isoform 4." evidence="4 5 6 7">
    <location>
        <begin position="1"/>
        <end position="19"/>
    </location>
</feature>
<feature type="splice variant" id="VSP_009780" description="In isoform 2 and isoform 4." evidence="4 6 7">
    <location>
        <begin position="131"/>
        <end position="165"/>
    </location>
</feature>
<sequence length="243" mass="27186">MSPAAPVPPDSALESPFEEMALVRGGWLWRQSSILRRWKRNWFALWLDGTLGYYHDETAQDEEDRVLIHFNVRDIKIGPECHDVQPPEGRSRDGLLTVNLREGGRLHLCAETKDDALAWKTALLEANSTPAPAGATVPPRSRRVCSKVRCVTRSWSPCKVERRIWVRVYSPYQDYYEVVPPNAHEATYVRSYYGPPYAGPGVTHVIVREDPCYSAGAPLAMGMLAGAATGAALGSLMWSPCWF</sequence>
<name>PKHB1_HUMAN</name>
<organism>
    <name type="scientific">Homo sapiens</name>
    <name type="common">Human</name>
    <dbReference type="NCBI Taxonomy" id="9606"/>
    <lineage>
        <taxon>Eukaryota</taxon>
        <taxon>Metazoa</taxon>
        <taxon>Chordata</taxon>
        <taxon>Craniata</taxon>
        <taxon>Vertebrata</taxon>
        <taxon>Euteleostomi</taxon>
        <taxon>Mammalia</taxon>
        <taxon>Eutheria</taxon>
        <taxon>Euarchontoglires</taxon>
        <taxon>Primates</taxon>
        <taxon>Haplorrhini</taxon>
        <taxon>Catarrhini</taxon>
        <taxon>Hominidae</taxon>
        <taxon>Homo</taxon>
    </lineage>
</organism>
<proteinExistence type="evidence at protein level"/>
<keyword id="KW-0025">Alternative splicing</keyword>
<keyword id="KW-0963">Cytoplasm</keyword>
<keyword id="KW-0217">Developmental protein</keyword>
<keyword id="KW-0472">Membrane</keyword>
<keyword id="KW-1267">Proteomics identification</keyword>
<keyword id="KW-1185">Reference proteome</keyword>
<reference key="1">
    <citation type="journal article" date="1999" name="J. Biol. Chem.">
        <title>PHR1 encodes an abundant, pleckstrin homology domain-containing integral membrane protein in the photoreceptor outer segments.</title>
        <authorList>
            <person name="Xu S."/>
            <person name="Ladak R."/>
            <person name="Swanson D.A."/>
            <person name="Soltyk A."/>
            <person name="Sun H."/>
            <person name="Ploder L."/>
            <person name="Vidgen D."/>
            <person name="Duncan A.M.V."/>
            <person name="Garami E."/>
            <person name="McInnes R.R."/>
            <person name="Valle D."/>
        </authorList>
    </citation>
    <scope>NUCLEOTIDE SEQUENCE [MRNA] (ISOFORMS 1; 2; 3 AND 4)</scope>
    <scope>INTERACTION WITH TRANSDUCIN</scope>
    <scope>TISSUE SPECIFICITY</scope>
    <scope>SUBCELLULAR LOCATION</scope>
    <source>
        <tissue>Brain</tissue>
        <tissue>Retina</tissue>
    </source>
</reference>
<reference key="2">
    <citation type="journal article" date="2000" name="Exp. Lung Res.">
        <title>KPL1, which encodes a novel PH domain-containing protein, is induced during ciliated cell differentiation of rat tracheal epithelial cells.</title>
        <authorList>
            <person name="Andrews K.L."/>
            <person name="Potdar P.D."/>
            <person name="Nettesheim P."/>
            <person name="Ostrowski L.E."/>
        </authorList>
    </citation>
    <scope>NUCLEOTIDE SEQUENCE [MRNA] (ISOFORM 3)</scope>
    <source>
        <tissue>Brain</tissue>
        <tissue>Retina</tissue>
        <tissue>Tracheal epithelium</tissue>
    </source>
</reference>
<reference key="3">
    <citation type="journal article" date="2004" name="Nat. Genet.">
        <title>Complete sequencing and characterization of 21,243 full-length human cDNAs.</title>
        <authorList>
            <person name="Ota T."/>
            <person name="Suzuki Y."/>
            <person name="Nishikawa T."/>
            <person name="Otsuki T."/>
            <person name="Sugiyama T."/>
            <person name="Irie R."/>
            <person name="Wakamatsu A."/>
            <person name="Hayashi K."/>
            <person name="Sato H."/>
            <person name="Nagai K."/>
            <person name="Kimura K."/>
            <person name="Makita H."/>
            <person name="Sekine M."/>
            <person name="Obayashi M."/>
            <person name="Nishi T."/>
            <person name="Shibahara T."/>
            <person name="Tanaka T."/>
            <person name="Ishii S."/>
            <person name="Yamamoto J."/>
            <person name="Saito K."/>
            <person name="Kawai Y."/>
            <person name="Isono Y."/>
            <person name="Nakamura Y."/>
            <person name="Nagahari K."/>
            <person name="Murakami K."/>
            <person name="Yasuda T."/>
            <person name="Iwayanagi T."/>
            <person name="Wagatsuma M."/>
            <person name="Shiratori A."/>
            <person name="Sudo H."/>
            <person name="Hosoiri T."/>
            <person name="Kaku Y."/>
            <person name="Kodaira H."/>
            <person name="Kondo H."/>
            <person name="Sugawara M."/>
            <person name="Takahashi M."/>
            <person name="Kanda K."/>
            <person name="Yokoi T."/>
            <person name="Furuya T."/>
            <person name="Kikkawa E."/>
            <person name="Omura Y."/>
            <person name="Abe K."/>
            <person name="Kamihara K."/>
            <person name="Katsuta N."/>
            <person name="Sato K."/>
            <person name="Tanikawa M."/>
            <person name="Yamazaki M."/>
            <person name="Ninomiya K."/>
            <person name="Ishibashi T."/>
            <person name="Yamashita H."/>
            <person name="Murakawa K."/>
            <person name="Fujimori K."/>
            <person name="Tanai H."/>
            <person name="Kimata M."/>
            <person name="Watanabe M."/>
            <person name="Hiraoka S."/>
            <person name="Chiba Y."/>
            <person name="Ishida S."/>
            <person name="Ono Y."/>
            <person name="Takiguchi S."/>
            <person name="Watanabe S."/>
            <person name="Yosida M."/>
            <person name="Hotuta T."/>
            <person name="Kusano J."/>
            <person name="Kanehori K."/>
            <person name="Takahashi-Fujii A."/>
            <person name="Hara H."/>
            <person name="Tanase T.-O."/>
            <person name="Nomura Y."/>
            <person name="Togiya S."/>
            <person name="Komai F."/>
            <person name="Hara R."/>
            <person name="Takeuchi K."/>
            <person name="Arita M."/>
            <person name="Imose N."/>
            <person name="Musashino K."/>
            <person name="Yuuki H."/>
            <person name="Oshima A."/>
            <person name="Sasaki N."/>
            <person name="Aotsuka S."/>
            <person name="Yoshikawa Y."/>
            <person name="Matsunawa H."/>
            <person name="Ichihara T."/>
            <person name="Shiohata N."/>
            <person name="Sano S."/>
            <person name="Moriya S."/>
            <person name="Momiyama H."/>
            <person name="Satoh N."/>
            <person name="Takami S."/>
            <person name="Terashima Y."/>
            <person name="Suzuki O."/>
            <person name="Nakagawa S."/>
            <person name="Senoh A."/>
            <person name="Mizoguchi H."/>
            <person name="Goto Y."/>
            <person name="Shimizu F."/>
            <person name="Wakebe H."/>
            <person name="Hishigaki H."/>
            <person name="Watanabe T."/>
            <person name="Sugiyama A."/>
            <person name="Takemoto M."/>
            <person name="Kawakami B."/>
            <person name="Yamazaki M."/>
            <person name="Watanabe K."/>
            <person name="Kumagai A."/>
            <person name="Itakura S."/>
            <person name="Fukuzumi Y."/>
            <person name="Fujimori Y."/>
            <person name="Komiyama M."/>
            <person name="Tashiro H."/>
            <person name="Tanigami A."/>
            <person name="Fujiwara T."/>
            <person name="Ono T."/>
            <person name="Yamada K."/>
            <person name="Fujii Y."/>
            <person name="Ozaki K."/>
            <person name="Hirao M."/>
            <person name="Ohmori Y."/>
            <person name="Kawabata A."/>
            <person name="Hikiji T."/>
            <person name="Kobatake N."/>
            <person name="Inagaki H."/>
            <person name="Ikema Y."/>
            <person name="Okamoto S."/>
            <person name="Okitani R."/>
            <person name="Kawakami T."/>
            <person name="Noguchi S."/>
            <person name="Itoh T."/>
            <person name="Shigeta K."/>
            <person name="Senba T."/>
            <person name="Matsumura K."/>
            <person name="Nakajima Y."/>
            <person name="Mizuno T."/>
            <person name="Morinaga M."/>
            <person name="Sasaki M."/>
            <person name="Togashi T."/>
            <person name="Oyama M."/>
            <person name="Hata H."/>
            <person name="Watanabe M."/>
            <person name="Komatsu T."/>
            <person name="Mizushima-Sugano J."/>
            <person name="Satoh T."/>
            <person name="Shirai Y."/>
            <person name="Takahashi Y."/>
            <person name="Nakagawa K."/>
            <person name="Okumura K."/>
            <person name="Nagase T."/>
            <person name="Nomura N."/>
            <person name="Kikuchi H."/>
            <person name="Masuho Y."/>
            <person name="Yamashita R."/>
            <person name="Nakai K."/>
            <person name="Yada T."/>
            <person name="Nakamura Y."/>
            <person name="Ohara O."/>
            <person name="Isogai T."/>
            <person name="Sugano S."/>
        </authorList>
    </citation>
    <scope>NUCLEOTIDE SEQUENCE [LARGE SCALE MRNA] (ISOFORMS 1; 3 AND 4)</scope>
    <source>
        <tissue>Amygdala</tissue>
        <tissue>Corpus callosum</tissue>
        <tissue>Stomach</tissue>
        <tissue>Subthalamic nucleus</tissue>
    </source>
</reference>
<reference key="4">
    <citation type="submission" date="2005-07" db="EMBL/GenBank/DDBJ databases">
        <authorList>
            <person name="Mural R.J."/>
            <person name="Istrail S."/>
            <person name="Sutton G.G."/>
            <person name="Florea L."/>
            <person name="Halpern A.L."/>
            <person name="Mobarry C.M."/>
            <person name="Lippert R."/>
            <person name="Walenz B."/>
            <person name="Shatkay H."/>
            <person name="Dew I."/>
            <person name="Miller J.R."/>
            <person name="Flanigan M.J."/>
            <person name="Edwards N.J."/>
            <person name="Bolanos R."/>
            <person name="Fasulo D."/>
            <person name="Halldorsson B.V."/>
            <person name="Hannenhalli S."/>
            <person name="Turner R."/>
            <person name="Yooseph S."/>
            <person name="Lu F."/>
            <person name="Nusskern D.R."/>
            <person name="Shue B.C."/>
            <person name="Zheng X.H."/>
            <person name="Zhong F."/>
            <person name="Delcher A.L."/>
            <person name="Huson D.H."/>
            <person name="Kravitz S.A."/>
            <person name="Mouchard L."/>
            <person name="Reinert K."/>
            <person name="Remington K.A."/>
            <person name="Clark A.G."/>
            <person name="Waterman M.S."/>
            <person name="Eichler E.E."/>
            <person name="Adams M.D."/>
            <person name="Hunkapiller M.W."/>
            <person name="Myers E.W."/>
            <person name="Venter J.C."/>
        </authorList>
    </citation>
    <scope>NUCLEOTIDE SEQUENCE [LARGE SCALE GENOMIC DNA]</scope>
</reference>
<reference key="5">
    <citation type="journal article" date="2004" name="Genome Res.">
        <title>The status, quality, and expansion of the NIH full-length cDNA project: the Mammalian Gene Collection (MGC).</title>
        <authorList>
            <consortium name="The MGC Project Team"/>
        </authorList>
    </citation>
    <scope>NUCLEOTIDE SEQUENCE [LARGE SCALE MRNA] (ISOFORM 4)</scope>
    <source>
        <tissue>Skin</tissue>
    </source>
</reference>
<dbReference type="EMBL" id="U89715">
    <property type="protein sequence ID" value="AAF16675.1"/>
    <property type="molecule type" value="mRNA"/>
</dbReference>
<dbReference type="EMBL" id="AF093249">
    <property type="protein sequence ID" value="AAF16684.1"/>
    <property type="molecule type" value="mRNA"/>
</dbReference>
<dbReference type="EMBL" id="AF101054">
    <property type="protein sequence ID" value="AAF18572.1"/>
    <property type="molecule type" value="mRNA"/>
</dbReference>
<dbReference type="EMBL" id="AF100612">
    <property type="protein sequence ID" value="AAF18932.1"/>
    <property type="molecule type" value="mRNA"/>
</dbReference>
<dbReference type="EMBL" id="AF081583">
    <property type="protein sequence ID" value="AAF21786.1"/>
    <property type="molecule type" value="mRNA"/>
</dbReference>
<dbReference type="EMBL" id="AK289620">
    <property type="protein sequence ID" value="BAF82309.1"/>
    <property type="molecule type" value="mRNA"/>
</dbReference>
<dbReference type="EMBL" id="AK289909">
    <property type="protein sequence ID" value="BAF82598.1"/>
    <property type="molecule type" value="mRNA"/>
</dbReference>
<dbReference type="EMBL" id="AK290109">
    <property type="protein sequence ID" value="BAF82798.1"/>
    <property type="molecule type" value="mRNA"/>
</dbReference>
<dbReference type="EMBL" id="AK301299">
    <property type="protein sequence ID" value="BAH13452.1"/>
    <property type="molecule type" value="mRNA"/>
</dbReference>
<dbReference type="EMBL" id="AK314748">
    <property type="protein sequence ID" value="BAG37288.1"/>
    <property type="molecule type" value="mRNA"/>
</dbReference>
<dbReference type="EMBL" id="CH471076">
    <property type="protein sequence ID" value="EAW74900.1"/>
    <property type="molecule type" value="Genomic_DNA"/>
</dbReference>
<dbReference type="EMBL" id="CH471076">
    <property type="protein sequence ID" value="EAW74903.1"/>
    <property type="molecule type" value="Genomic_DNA"/>
</dbReference>
<dbReference type="EMBL" id="CH471076">
    <property type="protein sequence ID" value="EAW74904.1"/>
    <property type="molecule type" value="Genomic_DNA"/>
</dbReference>
<dbReference type="EMBL" id="BC008075">
    <property type="protein sequence ID" value="AAH08075.1"/>
    <property type="molecule type" value="mRNA"/>
</dbReference>
<dbReference type="CCDS" id="CCDS44672.1">
    <molecule id="Q9UF11-1"/>
</dbReference>
<dbReference type="CCDS" id="CCDS44673.1">
    <molecule id="Q9UF11-2"/>
</dbReference>
<dbReference type="CCDS" id="CCDS44674.1">
    <molecule id="Q9UF11-3"/>
</dbReference>
<dbReference type="CCDS" id="CCDS44675.1">
    <molecule id="Q9UF11-4"/>
</dbReference>
<dbReference type="RefSeq" id="NP_001123505.1">
    <molecule id="Q9UF11-2"/>
    <property type="nucleotide sequence ID" value="NM_001130033.2"/>
</dbReference>
<dbReference type="RefSeq" id="NP_001123506.1">
    <molecule id="Q9UF11-3"/>
    <property type="nucleotide sequence ID" value="NM_001130034.2"/>
</dbReference>
<dbReference type="RefSeq" id="NP_001123507.1">
    <molecule id="Q9UF11-4"/>
    <property type="nucleotide sequence ID" value="NM_001130035.2"/>
</dbReference>
<dbReference type="RefSeq" id="NP_001123508.1">
    <molecule id="Q9UF11-4"/>
    <property type="nucleotide sequence ID" value="NM_001130036.2"/>
</dbReference>
<dbReference type="RefSeq" id="NP_067023.1">
    <molecule id="Q9UF11-1"/>
    <property type="nucleotide sequence ID" value="NM_021200.3"/>
</dbReference>
<dbReference type="RefSeq" id="XP_011543494.1">
    <molecule id="Q9UF11-3"/>
    <property type="nucleotide sequence ID" value="XM_011545192.3"/>
</dbReference>
<dbReference type="RefSeq" id="XP_011543495.1">
    <molecule id="Q9UF11-4"/>
    <property type="nucleotide sequence ID" value="XM_011545193.3"/>
</dbReference>
<dbReference type="RefSeq" id="XP_054225540.1">
    <molecule id="Q9UF11-3"/>
    <property type="nucleotide sequence ID" value="XM_054369565.1"/>
</dbReference>
<dbReference type="RefSeq" id="XP_054225541.1">
    <molecule id="Q9UF11-4"/>
    <property type="nucleotide sequence ID" value="XM_054369566.1"/>
</dbReference>
<dbReference type="SMR" id="Q9UF11"/>
<dbReference type="BioGRID" id="121807">
    <property type="interactions" value="31"/>
</dbReference>
<dbReference type="FunCoup" id="Q9UF11">
    <property type="interactions" value="314"/>
</dbReference>
<dbReference type="IntAct" id="Q9UF11">
    <property type="interactions" value="33"/>
</dbReference>
<dbReference type="MINT" id="Q9UF11"/>
<dbReference type="STRING" id="9606.ENSP00000346127"/>
<dbReference type="iPTMnet" id="Q9UF11"/>
<dbReference type="PhosphoSitePlus" id="Q9UF11"/>
<dbReference type="SwissPalm" id="Q9UF11"/>
<dbReference type="BioMuta" id="PLEKHB1"/>
<dbReference type="DMDM" id="48474683"/>
<dbReference type="jPOST" id="Q9UF11"/>
<dbReference type="MassIVE" id="Q9UF11"/>
<dbReference type="PaxDb" id="9606-ENSP00000346127"/>
<dbReference type="PeptideAtlas" id="Q9UF11"/>
<dbReference type="ProteomicsDB" id="84163">
    <molecule id="Q9UF11-1"/>
</dbReference>
<dbReference type="ProteomicsDB" id="84164">
    <molecule id="Q9UF11-2"/>
</dbReference>
<dbReference type="ProteomicsDB" id="84165">
    <molecule id="Q9UF11-3"/>
</dbReference>
<dbReference type="ProteomicsDB" id="84166">
    <molecule id="Q9UF11-4"/>
</dbReference>
<dbReference type="Antibodypedia" id="30966">
    <property type="antibodies" value="46 antibodies from 22 providers"/>
</dbReference>
<dbReference type="DNASU" id="58473"/>
<dbReference type="Ensembl" id="ENST00000227214.10">
    <molecule id="Q9UF11-4"/>
    <property type="protein sequence ID" value="ENSP00000227214.6"/>
    <property type="gene ID" value="ENSG00000021300.14"/>
</dbReference>
<dbReference type="Ensembl" id="ENST00000354190.10">
    <molecule id="Q9UF11-1"/>
    <property type="protein sequence ID" value="ENSP00000346127.5"/>
    <property type="gene ID" value="ENSG00000021300.14"/>
</dbReference>
<dbReference type="Ensembl" id="ENST00000398492.8">
    <molecule id="Q9UF11-2"/>
    <property type="protein sequence ID" value="ENSP00000381505.4"/>
    <property type="gene ID" value="ENSG00000021300.14"/>
</dbReference>
<dbReference type="Ensembl" id="ENST00000398494.8">
    <molecule id="Q9UF11-3"/>
    <property type="protein sequence ID" value="ENSP00000381507.4"/>
    <property type="gene ID" value="ENSG00000021300.14"/>
</dbReference>
<dbReference type="Ensembl" id="ENST00000535129.5">
    <molecule id="Q9UF11-4"/>
    <property type="protein sequence ID" value="ENSP00000442616.1"/>
    <property type="gene ID" value="ENSG00000021300.14"/>
</dbReference>
<dbReference type="GeneID" id="58473"/>
<dbReference type="KEGG" id="hsa:58473"/>
<dbReference type="MANE-Select" id="ENST00000354190.10">
    <property type="protein sequence ID" value="ENSP00000346127.5"/>
    <property type="RefSeq nucleotide sequence ID" value="NM_021200.3"/>
    <property type="RefSeq protein sequence ID" value="NP_067023.1"/>
</dbReference>
<dbReference type="UCSC" id="uc001oua.3">
    <molecule id="Q9UF11-1"/>
    <property type="organism name" value="human"/>
</dbReference>
<dbReference type="AGR" id="HGNC:19079"/>
<dbReference type="CTD" id="58473"/>
<dbReference type="DisGeNET" id="58473"/>
<dbReference type="GeneCards" id="PLEKHB1"/>
<dbReference type="HGNC" id="HGNC:19079">
    <property type="gene designation" value="PLEKHB1"/>
</dbReference>
<dbReference type="HPA" id="ENSG00000021300">
    <property type="expression patterns" value="Tissue enhanced (brain, retina)"/>
</dbReference>
<dbReference type="MIM" id="607651">
    <property type="type" value="gene"/>
</dbReference>
<dbReference type="neXtProt" id="NX_Q9UF11"/>
<dbReference type="OpenTargets" id="ENSG00000021300"/>
<dbReference type="PharmGKB" id="PA38787"/>
<dbReference type="VEuPathDB" id="HostDB:ENSG00000021300"/>
<dbReference type="eggNOG" id="ENOG502RQ6P">
    <property type="taxonomic scope" value="Eukaryota"/>
</dbReference>
<dbReference type="GeneTree" id="ENSGT00390000013989"/>
<dbReference type="HOGENOM" id="CLU_102020_0_0_1"/>
<dbReference type="InParanoid" id="Q9UF11"/>
<dbReference type="OMA" id="HFNVRDV"/>
<dbReference type="OrthoDB" id="2157866at2759"/>
<dbReference type="PAN-GO" id="Q9UF11">
    <property type="GO annotations" value="2 GO annotations based on evolutionary models"/>
</dbReference>
<dbReference type="PhylomeDB" id="Q9UF11"/>
<dbReference type="TreeFam" id="TF331787"/>
<dbReference type="PathwayCommons" id="Q9UF11"/>
<dbReference type="SignaLink" id="Q9UF11"/>
<dbReference type="BioGRID-ORCS" id="58473">
    <property type="hits" value="17 hits in 1149 CRISPR screens"/>
</dbReference>
<dbReference type="ChiTaRS" id="PLEKHB1">
    <property type="organism name" value="human"/>
</dbReference>
<dbReference type="GenomeRNAi" id="58473"/>
<dbReference type="Pharos" id="Q9UF11">
    <property type="development level" value="Tbio"/>
</dbReference>
<dbReference type="PRO" id="PR:Q9UF11"/>
<dbReference type="Proteomes" id="UP000005640">
    <property type="component" value="Chromosome 11"/>
</dbReference>
<dbReference type="RNAct" id="Q9UF11">
    <property type="molecule type" value="protein"/>
</dbReference>
<dbReference type="Bgee" id="ENSG00000021300">
    <property type="expression patterns" value="Expressed in C1 segment of cervical spinal cord and 178 other cell types or tissues"/>
</dbReference>
<dbReference type="ExpressionAtlas" id="Q9UF11">
    <property type="expression patterns" value="baseline and differential"/>
</dbReference>
<dbReference type="GO" id="GO:0005737">
    <property type="term" value="C:cytoplasm"/>
    <property type="evidence" value="ECO:0007669"/>
    <property type="project" value="UniProtKB-SubCell"/>
</dbReference>
<dbReference type="GO" id="GO:0016020">
    <property type="term" value="C:membrane"/>
    <property type="evidence" value="ECO:0000314"/>
    <property type="project" value="UniProtKB"/>
</dbReference>
<dbReference type="GO" id="GO:0007602">
    <property type="term" value="P:phototransduction"/>
    <property type="evidence" value="ECO:0000303"/>
    <property type="project" value="UniProtKB"/>
</dbReference>
<dbReference type="GO" id="GO:0045595">
    <property type="term" value="P:regulation of cell differentiation"/>
    <property type="evidence" value="ECO:0000318"/>
    <property type="project" value="GO_Central"/>
</dbReference>
<dbReference type="CDD" id="cd13265">
    <property type="entry name" value="PH_evt"/>
    <property type="match status" value="1"/>
</dbReference>
<dbReference type="FunFam" id="2.30.29.30:FF:000073">
    <property type="entry name" value="Pleckstrin homology domain-containing family B member 2"/>
    <property type="match status" value="1"/>
</dbReference>
<dbReference type="Gene3D" id="2.30.29.30">
    <property type="entry name" value="Pleckstrin-homology domain (PH domain)/Phosphotyrosine-binding domain (PTB)"/>
    <property type="match status" value="1"/>
</dbReference>
<dbReference type="InterPro" id="IPR011993">
    <property type="entry name" value="PH-like_dom_sf"/>
</dbReference>
<dbReference type="InterPro" id="IPR001849">
    <property type="entry name" value="PH_domain"/>
</dbReference>
<dbReference type="InterPro" id="IPR039680">
    <property type="entry name" value="PLEKHB1/2"/>
</dbReference>
<dbReference type="PANTHER" id="PTHR14309">
    <property type="entry name" value="EXPRESSED PROTEIN"/>
    <property type="match status" value="1"/>
</dbReference>
<dbReference type="PANTHER" id="PTHR14309:SF7">
    <property type="entry name" value="PLECKSTRIN HOMOLOGY DOMAIN-CONTAINING FAMILY B MEMBER 1"/>
    <property type="match status" value="1"/>
</dbReference>
<dbReference type="Pfam" id="PF00169">
    <property type="entry name" value="PH"/>
    <property type="match status" value="1"/>
</dbReference>
<dbReference type="SMART" id="SM00233">
    <property type="entry name" value="PH"/>
    <property type="match status" value="1"/>
</dbReference>
<dbReference type="SUPFAM" id="SSF50729">
    <property type="entry name" value="PH domain-like"/>
    <property type="match status" value="1"/>
</dbReference>
<dbReference type="PROSITE" id="PS50003">
    <property type="entry name" value="PH_DOMAIN"/>
    <property type="match status" value="1"/>
</dbReference>
<protein>
    <recommendedName>
        <fullName>Pleckstrin homology domain-containing family B member 1</fullName>
        <shortName>PH domain-containing family B member 1</shortName>
    </recommendedName>
    <alternativeName>
        <fullName>Evectin-1</fullName>
    </alternativeName>
    <alternativeName>
        <fullName>PH domain-containing protein in retina 1</fullName>
        <shortName>PHRET1</shortName>
    </alternativeName>
    <alternativeName>
        <fullName>Pleckstrin homology domain retinal protein 1</fullName>
    </alternativeName>
</protein>
<comment type="subunit">
    <text evidence="1 3">Homodimer. Interacts (via PH domain) with MYO1C. Interacts (via PH domain) with MYO7A (By similarity). Binds transducins (PubMed:10585447).</text>
</comment>
<comment type="interaction">
    <interactant intactId="EBI-6447271">
        <id>Q9UF11</id>
    </interactant>
    <interactant intactId="EBI-746389">
        <id>P52306</id>
        <label>RAP1GDS1</label>
    </interactant>
    <organismsDiffer>false</organismsDiffer>
    <experiments>5</experiments>
</comment>
<comment type="interaction">
    <interactant intactId="EBI-12832742">
        <id>Q9UF11-2</id>
    </interactant>
    <interactant intactId="EBI-747185">
        <id>O95817</id>
        <label>BAG3</label>
    </interactant>
    <organismsDiffer>false</organismsDiffer>
    <experiments>3</experiments>
</comment>
<comment type="interaction">
    <interactant intactId="EBI-12832742">
        <id>Q9UF11-2</id>
    </interactant>
    <interactant intactId="EBI-12809220">
        <id>Q5SWW7</id>
        <label>C10orf55</label>
    </interactant>
    <organismsDiffer>false</organismsDiffer>
    <experiments>4</experiments>
</comment>
<comment type="interaction">
    <interactant intactId="EBI-12832742">
        <id>Q9UF11-2</id>
    </interactant>
    <interactant intactId="EBI-10976677">
        <id>G5E9A7</id>
        <label>DMWD</label>
    </interactant>
    <organismsDiffer>false</organismsDiffer>
    <experiments>3</experiments>
</comment>
<comment type="interaction">
    <interactant intactId="EBI-12832742">
        <id>Q9UF11-2</id>
    </interactant>
    <interactant intactId="EBI-7251368">
        <id>Q9BZE0</id>
        <label>GLIS2</label>
    </interactant>
    <organismsDiffer>false</organismsDiffer>
    <experiments>3</experiments>
</comment>
<comment type="interaction">
    <interactant intactId="EBI-12832742">
        <id>Q9UF11-2</id>
    </interactant>
    <interactant intactId="EBI-352682">
        <id>P04792</id>
        <label>HSPB1</label>
    </interactant>
    <organismsDiffer>false</organismsDiffer>
    <experiments>3</experiments>
</comment>
<comment type="interaction">
    <interactant intactId="EBI-12832742">
        <id>Q9UF11-2</id>
    </interactant>
    <interactant intactId="EBI-10975473">
        <id>O60333-2</id>
        <label>KIF1B</label>
    </interactant>
    <organismsDiffer>false</organismsDiffer>
    <experiments>3</experiments>
</comment>
<comment type="interaction">
    <interactant intactId="EBI-12832742">
        <id>Q9UF11-2</id>
    </interactant>
    <interactant intactId="EBI-12832744">
        <id>P52306-5</id>
        <label>RAP1GDS1</label>
    </interactant>
    <organismsDiffer>false</organismsDiffer>
    <experiments>5</experiments>
</comment>
<comment type="interaction">
    <interactant intactId="EBI-12832742">
        <id>Q9UF11-2</id>
    </interactant>
    <interactant intactId="EBI-396669">
        <id>Q9Y3C5</id>
        <label>RNF11</label>
    </interactant>
    <organismsDiffer>false</organismsDiffer>
    <experiments>3</experiments>
</comment>
<comment type="interaction">
    <interactant intactId="EBI-12832742">
        <id>Q9UF11-2</id>
    </interactant>
    <interactant intactId="EBI-11746252">
        <id>Q9NQB0-10</id>
        <label>TCF7L2</label>
    </interactant>
    <organismsDiffer>false</organismsDiffer>
    <experiments>3</experiments>
</comment>
<comment type="interaction">
    <interactant intactId="EBI-12832742">
        <id>Q9UF11-2</id>
    </interactant>
    <interactant intactId="EBI-10191303">
        <id>O95231</id>
        <label>VENTX</label>
    </interactant>
    <organismsDiffer>false</organismsDiffer>
    <experiments>3</experiments>
</comment>
<comment type="interaction">
    <interactant intactId="EBI-12832742">
        <id>Q9UF11-2</id>
    </interactant>
    <interactant intactId="EBI-720609">
        <id>O76024</id>
        <label>WFS1</label>
    </interactant>
    <organismsDiffer>false</organismsDiffer>
    <experiments>3</experiments>
</comment>
<comment type="interaction">
    <interactant intactId="EBI-9089825">
        <id>Q9UF11-4</id>
    </interactant>
    <interactant intactId="EBI-490630">
        <id>Q9NP31</id>
        <label>SH2D2A</label>
    </interactant>
    <organismsDiffer>false</organismsDiffer>
    <experiments>3</experiments>
</comment>
<comment type="interaction">
    <interactant intactId="EBI-9089825">
        <id>Q9UF11-4</id>
    </interactant>
    <interactant intactId="EBI-524753">
        <id>Q8IUH5</id>
        <label>ZDHHC17</label>
    </interactant>
    <organismsDiffer>false</organismsDiffer>
    <experiments>4</experiments>
</comment>
<comment type="subcellular location">
    <subcellularLocation>
        <location evidence="3">Membrane</location>
    </subcellularLocation>
    <subcellularLocation>
        <location evidence="1">Cytoplasm</location>
    </subcellularLocation>
    <text evidence="1 3">Localizes to the apical juxta-nuclear Golgi region of the cytoplasm (By similarity). Membrane-associated (PubMed:10585447). Highly expressed in the outer segments of photoreceptor cells, both in rods and cones (PubMed:10585447).</text>
</comment>
<comment type="alternative products">
    <event type="alternative splicing"/>
    <isoform>
        <id>Q9UF11-1</id>
        <name>1</name>
        <sequence type="displayed"/>
    </isoform>
    <isoform>
        <id>Q9UF11-2</id>
        <name>2</name>
        <sequence type="described" ref="VSP_009780"/>
    </isoform>
    <isoform>
        <id>Q9UF11-3</id>
        <name>3</name>
        <sequence type="described" ref="VSP_009779"/>
    </isoform>
    <isoform>
        <id>Q9UF11-4</id>
        <name>4</name>
        <sequence type="described" ref="VSP_009779 VSP_009780"/>
    </isoform>
</comment>
<comment type="tissue specificity">
    <text evidence="3">Highly expressed in retina and brain. Levels are very low or not detectable in all other tissues tested.</text>
</comment>